<accession>A9AXP4</accession>
<gene>
    <name evidence="1" type="primary">ligA</name>
    <name type="ordered locus">Haur_0810</name>
</gene>
<comment type="function">
    <text evidence="1">DNA ligase that catalyzes the formation of phosphodiester linkages between 5'-phosphoryl and 3'-hydroxyl groups in double-stranded DNA using NAD as a coenzyme and as the energy source for the reaction. It is essential for DNA replication and repair of damaged DNA.</text>
</comment>
<comment type="catalytic activity">
    <reaction evidence="1">
        <text>NAD(+) + (deoxyribonucleotide)n-3'-hydroxyl + 5'-phospho-(deoxyribonucleotide)m = (deoxyribonucleotide)n+m + AMP + beta-nicotinamide D-nucleotide.</text>
        <dbReference type="EC" id="6.5.1.2"/>
    </reaction>
</comment>
<comment type="cofactor">
    <cofactor evidence="1">
        <name>Mg(2+)</name>
        <dbReference type="ChEBI" id="CHEBI:18420"/>
    </cofactor>
    <cofactor evidence="1">
        <name>Mn(2+)</name>
        <dbReference type="ChEBI" id="CHEBI:29035"/>
    </cofactor>
</comment>
<comment type="similarity">
    <text evidence="1">Belongs to the NAD-dependent DNA ligase family. LigA subfamily.</text>
</comment>
<name>DNLJ_HERA2</name>
<sequence>MAVSEQTVARAASLRDELNLYNHHYYTLDAPLVSDAQYDSLLNELRAIEAEYPELRTPDSPTQRVGSAPLSKFPKVQHPVPMLSLGNAFNADDLAAWRRRAEQIIGTQPMSYTVEPKIDGLAVALTYINGVFSVGATRGNGEIGEDITANLRTIRDVPLRLQPIDGQALPERIEVRGEVYLPIESFNQLNERQAHAGEKVFANPRNAAAGSLRQLDSTITASRPLRFFAYAVGPFSGVELKSQAQTLDTLRTYGFSVNPDTRLFADFEAVIEYCHEWMSRRESLSYEVDGVVVKINDFAMQRELGVVGRDPRWAIAYKFPAREETTTLLNIVINVGRTGKLIPNAVLEPVSLGGTTVQHASLHNADYIISRDIRIGDRVVVKRAGDVIPYVIGPIVEARTGDERVWPAPTHCPTCGQPVEQIGDEVDIYCVNNTCPARLIRSIEHWVSRGAMDIVGMGERQASQFVEMGLIKSIPDIYRLTVDSFGGREGYGERRVANLLNAIEESKRRPLDRVITALGINGVGTVAAADLARYFRSLPALAQATIEQLTAIEGIGGSTAQSVVDFFNTPANQQLIAELLALGLKAEPSEVAELQSDRLAGKSFVITGTLPGISREAAQALIEAHGGKVGGSVSKKTDYLLAGEAAGSKLTKAQSLGVKVLSMDELHALLVDE</sequence>
<organism>
    <name type="scientific">Herpetosiphon aurantiacus (strain ATCC 23779 / DSM 785 / 114-95)</name>
    <dbReference type="NCBI Taxonomy" id="316274"/>
    <lineage>
        <taxon>Bacteria</taxon>
        <taxon>Bacillati</taxon>
        <taxon>Chloroflexota</taxon>
        <taxon>Chloroflexia</taxon>
        <taxon>Herpetosiphonales</taxon>
        <taxon>Herpetosiphonaceae</taxon>
        <taxon>Herpetosiphon</taxon>
    </lineage>
</organism>
<keyword id="KW-0227">DNA damage</keyword>
<keyword id="KW-0234">DNA repair</keyword>
<keyword id="KW-0235">DNA replication</keyword>
<keyword id="KW-0436">Ligase</keyword>
<keyword id="KW-0460">Magnesium</keyword>
<keyword id="KW-0464">Manganese</keyword>
<keyword id="KW-0479">Metal-binding</keyword>
<keyword id="KW-0520">NAD</keyword>
<keyword id="KW-0862">Zinc</keyword>
<reference key="1">
    <citation type="journal article" date="2011" name="Stand. Genomic Sci.">
        <title>Complete genome sequence of the filamentous gliding predatory bacterium Herpetosiphon aurantiacus type strain (114-95(T)).</title>
        <authorList>
            <person name="Kiss H."/>
            <person name="Nett M."/>
            <person name="Domin N."/>
            <person name="Martin K."/>
            <person name="Maresca J.A."/>
            <person name="Copeland A."/>
            <person name="Lapidus A."/>
            <person name="Lucas S."/>
            <person name="Berry K.W."/>
            <person name="Glavina Del Rio T."/>
            <person name="Dalin E."/>
            <person name="Tice H."/>
            <person name="Pitluck S."/>
            <person name="Richardson P."/>
            <person name="Bruce D."/>
            <person name="Goodwin L."/>
            <person name="Han C."/>
            <person name="Detter J.C."/>
            <person name="Schmutz J."/>
            <person name="Brettin T."/>
            <person name="Land M."/>
            <person name="Hauser L."/>
            <person name="Kyrpides N.C."/>
            <person name="Ivanova N."/>
            <person name="Goeker M."/>
            <person name="Woyke T."/>
            <person name="Klenk H.P."/>
            <person name="Bryant D.A."/>
        </authorList>
    </citation>
    <scope>NUCLEOTIDE SEQUENCE [LARGE SCALE GENOMIC DNA]</scope>
    <source>
        <strain>ATCC 23779 / DSM 785 / 114-95</strain>
    </source>
</reference>
<proteinExistence type="inferred from homology"/>
<protein>
    <recommendedName>
        <fullName evidence="1">DNA ligase</fullName>
        <ecNumber evidence="1">6.5.1.2</ecNumber>
    </recommendedName>
    <alternativeName>
        <fullName evidence="1">Polydeoxyribonucleotide synthase [NAD(+)]</fullName>
    </alternativeName>
</protein>
<evidence type="ECO:0000255" key="1">
    <source>
        <dbReference type="HAMAP-Rule" id="MF_01588"/>
    </source>
</evidence>
<feature type="chain" id="PRO_0000380399" description="DNA ligase">
    <location>
        <begin position="1"/>
        <end position="673"/>
    </location>
</feature>
<feature type="domain" description="BRCT" evidence="1">
    <location>
        <begin position="594"/>
        <end position="673"/>
    </location>
</feature>
<feature type="active site" description="N6-AMP-lysine intermediate" evidence="1">
    <location>
        <position position="117"/>
    </location>
</feature>
<feature type="binding site" evidence="1">
    <location>
        <begin position="35"/>
        <end position="39"/>
    </location>
    <ligand>
        <name>NAD(+)</name>
        <dbReference type="ChEBI" id="CHEBI:57540"/>
    </ligand>
</feature>
<feature type="binding site" evidence="1">
    <location>
        <begin position="84"/>
        <end position="85"/>
    </location>
    <ligand>
        <name>NAD(+)</name>
        <dbReference type="ChEBI" id="CHEBI:57540"/>
    </ligand>
</feature>
<feature type="binding site" evidence="1">
    <location>
        <position position="115"/>
    </location>
    <ligand>
        <name>NAD(+)</name>
        <dbReference type="ChEBI" id="CHEBI:57540"/>
    </ligand>
</feature>
<feature type="binding site" evidence="1">
    <location>
        <position position="138"/>
    </location>
    <ligand>
        <name>NAD(+)</name>
        <dbReference type="ChEBI" id="CHEBI:57540"/>
    </ligand>
</feature>
<feature type="binding site" evidence="1">
    <location>
        <position position="178"/>
    </location>
    <ligand>
        <name>NAD(+)</name>
        <dbReference type="ChEBI" id="CHEBI:57540"/>
    </ligand>
</feature>
<feature type="binding site" evidence="1">
    <location>
        <position position="294"/>
    </location>
    <ligand>
        <name>NAD(+)</name>
        <dbReference type="ChEBI" id="CHEBI:57540"/>
    </ligand>
</feature>
<feature type="binding site" evidence="1">
    <location>
        <position position="318"/>
    </location>
    <ligand>
        <name>NAD(+)</name>
        <dbReference type="ChEBI" id="CHEBI:57540"/>
    </ligand>
</feature>
<feature type="binding site" evidence="1">
    <location>
        <position position="412"/>
    </location>
    <ligand>
        <name>Zn(2+)</name>
        <dbReference type="ChEBI" id="CHEBI:29105"/>
    </ligand>
</feature>
<feature type="binding site" evidence="1">
    <location>
        <position position="415"/>
    </location>
    <ligand>
        <name>Zn(2+)</name>
        <dbReference type="ChEBI" id="CHEBI:29105"/>
    </ligand>
</feature>
<feature type="binding site" evidence="1">
    <location>
        <position position="430"/>
    </location>
    <ligand>
        <name>Zn(2+)</name>
        <dbReference type="ChEBI" id="CHEBI:29105"/>
    </ligand>
</feature>
<feature type="binding site" evidence="1">
    <location>
        <position position="435"/>
    </location>
    <ligand>
        <name>Zn(2+)</name>
        <dbReference type="ChEBI" id="CHEBI:29105"/>
    </ligand>
</feature>
<dbReference type="EC" id="6.5.1.2" evidence="1"/>
<dbReference type="EMBL" id="CP000875">
    <property type="protein sequence ID" value="ABX03458.1"/>
    <property type="molecule type" value="Genomic_DNA"/>
</dbReference>
<dbReference type="SMR" id="A9AXP4"/>
<dbReference type="FunCoup" id="A9AXP4">
    <property type="interactions" value="339"/>
</dbReference>
<dbReference type="STRING" id="316274.Haur_0810"/>
<dbReference type="KEGG" id="hau:Haur_0810"/>
<dbReference type="eggNOG" id="COG0272">
    <property type="taxonomic scope" value="Bacteria"/>
</dbReference>
<dbReference type="HOGENOM" id="CLU_007764_2_1_0"/>
<dbReference type="InParanoid" id="A9AXP4"/>
<dbReference type="Proteomes" id="UP000000787">
    <property type="component" value="Chromosome"/>
</dbReference>
<dbReference type="GO" id="GO:0005829">
    <property type="term" value="C:cytosol"/>
    <property type="evidence" value="ECO:0007669"/>
    <property type="project" value="TreeGrafter"/>
</dbReference>
<dbReference type="GO" id="GO:0003677">
    <property type="term" value="F:DNA binding"/>
    <property type="evidence" value="ECO:0007669"/>
    <property type="project" value="InterPro"/>
</dbReference>
<dbReference type="GO" id="GO:0003911">
    <property type="term" value="F:DNA ligase (NAD+) activity"/>
    <property type="evidence" value="ECO:0007669"/>
    <property type="project" value="UniProtKB-UniRule"/>
</dbReference>
<dbReference type="GO" id="GO:0046872">
    <property type="term" value="F:metal ion binding"/>
    <property type="evidence" value="ECO:0007669"/>
    <property type="project" value="UniProtKB-KW"/>
</dbReference>
<dbReference type="GO" id="GO:0006281">
    <property type="term" value="P:DNA repair"/>
    <property type="evidence" value="ECO:0007669"/>
    <property type="project" value="UniProtKB-KW"/>
</dbReference>
<dbReference type="GO" id="GO:0006260">
    <property type="term" value="P:DNA replication"/>
    <property type="evidence" value="ECO:0007669"/>
    <property type="project" value="UniProtKB-KW"/>
</dbReference>
<dbReference type="CDD" id="cd17748">
    <property type="entry name" value="BRCT_DNA_ligase_like"/>
    <property type="match status" value="1"/>
</dbReference>
<dbReference type="CDD" id="cd00114">
    <property type="entry name" value="LIGANc"/>
    <property type="match status" value="1"/>
</dbReference>
<dbReference type="FunFam" id="1.10.150.20:FF:000006">
    <property type="entry name" value="DNA ligase"/>
    <property type="match status" value="1"/>
</dbReference>
<dbReference type="FunFam" id="1.10.150.20:FF:000007">
    <property type="entry name" value="DNA ligase"/>
    <property type="match status" value="1"/>
</dbReference>
<dbReference type="FunFam" id="1.10.287.610:FF:000002">
    <property type="entry name" value="DNA ligase"/>
    <property type="match status" value="1"/>
</dbReference>
<dbReference type="FunFam" id="3.30.470.30:FF:000001">
    <property type="entry name" value="DNA ligase"/>
    <property type="match status" value="1"/>
</dbReference>
<dbReference type="Gene3D" id="6.20.10.30">
    <property type="match status" value="1"/>
</dbReference>
<dbReference type="Gene3D" id="1.10.150.20">
    <property type="entry name" value="5' to 3' exonuclease, C-terminal subdomain"/>
    <property type="match status" value="2"/>
</dbReference>
<dbReference type="Gene3D" id="3.40.50.10190">
    <property type="entry name" value="BRCT domain"/>
    <property type="match status" value="1"/>
</dbReference>
<dbReference type="Gene3D" id="3.30.470.30">
    <property type="entry name" value="DNA ligase/mRNA capping enzyme"/>
    <property type="match status" value="1"/>
</dbReference>
<dbReference type="Gene3D" id="1.10.287.610">
    <property type="entry name" value="Helix hairpin bin"/>
    <property type="match status" value="1"/>
</dbReference>
<dbReference type="Gene3D" id="2.40.50.140">
    <property type="entry name" value="Nucleic acid-binding proteins"/>
    <property type="match status" value="1"/>
</dbReference>
<dbReference type="HAMAP" id="MF_01588">
    <property type="entry name" value="DNA_ligase_A"/>
    <property type="match status" value="1"/>
</dbReference>
<dbReference type="InterPro" id="IPR001357">
    <property type="entry name" value="BRCT_dom"/>
</dbReference>
<dbReference type="InterPro" id="IPR036420">
    <property type="entry name" value="BRCT_dom_sf"/>
</dbReference>
<dbReference type="InterPro" id="IPR041663">
    <property type="entry name" value="DisA/LigA_HHH"/>
</dbReference>
<dbReference type="InterPro" id="IPR001679">
    <property type="entry name" value="DNA_ligase"/>
</dbReference>
<dbReference type="InterPro" id="IPR018239">
    <property type="entry name" value="DNA_ligase_AS"/>
</dbReference>
<dbReference type="InterPro" id="IPR013839">
    <property type="entry name" value="DNAligase_adenylation"/>
</dbReference>
<dbReference type="InterPro" id="IPR013840">
    <property type="entry name" value="DNAligase_N"/>
</dbReference>
<dbReference type="InterPro" id="IPR003583">
    <property type="entry name" value="Hlx-hairpin-Hlx_DNA-bd_motif"/>
</dbReference>
<dbReference type="InterPro" id="IPR012340">
    <property type="entry name" value="NA-bd_OB-fold"/>
</dbReference>
<dbReference type="InterPro" id="IPR004150">
    <property type="entry name" value="NAD_DNA_ligase_OB"/>
</dbReference>
<dbReference type="InterPro" id="IPR010994">
    <property type="entry name" value="RuvA_2-like"/>
</dbReference>
<dbReference type="InterPro" id="IPR004149">
    <property type="entry name" value="Znf_DNAligase_C4"/>
</dbReference>
<dbReference type="NCBIfam" id="TIGR00575">
    <property type="entry name" value="dnlj"/>
    <property type="match status" value="1"/>
</dbReference>
<dbReference type="NCBIfam" id="NF005932">
    <property type="entry name" value="PRK07956.1"/>
    <property type="match status" value="1"/>
</dbReference>
<dbReference type="PANTHER" id="PTHR23389">
    <property type="entry name" value="CHROMOSOME TRANSMISSION FIDELITY FACTOR 18"/>
    <property type="match status" value="1"/>
</dbReference>
<dbReference type="PANTHER" id="PTHR23389:SF9">
    <property type="entry name" value="DNA LIGASE"/>
    <property type="match status" value="1"/>
</dbReference>
<dbReference type="Pfam" id="PF00533">
    <property type="entry name" value="BRCT"/>
    <property type="match status" value="1"/>
</dbReference>
<dbReference type="Pfam" id="PF01653">
    <property type="entry name" value="DNA_ligase_aden"/>
    <property type="match status" value="1"/>
</dbReference>
<dbReference type="Pfam" id="PF03120">
    <property type="entry name" value="DNA_ligase_OB"/>
    <property type="match status" value="1"/>
</dbReference>
<dbReference type="Pfam" id="PF03119">
    <property type="entry name" value="DNA_ligase_ZBD"/>
    <property type="match status" value="1"/>
</dbReference>
<dbReference type="Pfam" id="PF12826">
    <property type="entry name" value="HHH_2"/>
    <property type="match status" value="1"/>
</dbReference>
<dbReference type="PIRSF" id="PIRSF001604">
    <property type="entry name" value="LigA"/>
    <property type="match status" value="1"/>
</dbReference>
<dbReference type="SMART" id="SM00292">
    <property type="entry name" value="BRCT"/>
    <property type="match status" value="1"/>
</dbReference>
<dbReference type="SMART" id="SM00278">
    <property type="entry name" value="HhH1"/>
    <property type="match status" value="3"/>
</dbReference>
<dbReference type="SMART" id="SM00532">
    <property type="entry name" value="LIGANc"/>
    <property type="match status" value="1"/>
</dbReference>
<dbReference type="SUPFAM" id="SSF52113">
    <property type="entry name" value="BRCT domain"/>
    <property type="match status" value="1"/>
</dbReference>
<dbReference type="SUPFAM" id="SSF56091">
    <property type="entry name" value="DNA ligase/mRNA capping enzyme, catalytic domain"/>
    <property type="match status" value="1"/>
</dbReference>
<dbReference type="SUPFAM" id="SSF50249">
    <property type="entry name" value="Nucleic acid-binding proteins"/>
    <property type="match status" value="1"/>
</dbReference>
<dbReference type="SUPFAM" id="SSF47781">
    <property type="entry name" value="RuvA domain 2-like"/>
    <property type="match status" value="1"/>
</dbReference>
<dbReference type="PROSITE" id="PS50172">
    <property type="entry name" value="BRCT"/>
    <property type="match status" value="1"/>
</dbReference>
<dbReference type="PROSITE" id="PS01055">
    <property type="entry name" value="DNA_LIGASE_N1"/>
    <property type="match status" value="1"/>
</dbReference>